<sequence>MANMRKSHPLLKIINHSFIDLPTPSSISSWWNFGSLLGICLLIQISTGLFLSMHYTSDTMTAFSSVTHICRDVNYGWLIRYLHANGASMFFICLFLHVGRGLYYGSYAFMETWNVGVILMFTVMATAFMGYVLPWGQMSFWGATVITNLLSAIPYIGPTIVEWIWGGFSVDKATLTRFFAFHFILPFIIAALAMVHLLFLHETGSXNPSGLDSNADKIPFHPYYTIKDILGALIMISVLILLVLFSPDLLGDPDNYTPANPLNTPPHIKPEWYFLFAYAILRSIPNKLGGVVALVLSILILALLPFLHTSKQRSLIFRPITQVLYWILVADLLVLTWIGGQPVEHPFITIGQLASILYFSIILIFMPLSGLIENKIMKWY</sequence>
<comment type="function">
    <text evidence="2">Component of the ubiquinol-cytochrome c reductase complex (complex III or cytochrome b-c1 complex) that is part of the mitochondrial respiratory chain. The b-c1 complex mediates electron transfer from ubiquinol to cytochrome c. Contributes to the generation of a proton gradient across the mitochondrial membrane that is then used for ATP synthesis.</text>
</comment>
<comment type="cofactor">
    <cofactor evidence="2">
        <name>heme b</name>
        <dbReference type="ChEBI" id="CHEBI:60344"/>
    </cofactor>
    <text evidence="2">Binds 2 heme b groups non-covalently.</text>
</comment>
<comment type="subunit">
    <text evidence="2">The cytochrome bc1 complex contains 11 subunits: 3 respiratory subunits (MT-CYB, CYC1 and UQCRFS1), 2 core proteins (UQCRC1 and UQCRC2) and 6 low-molecular weight proteins (UQCRH/QCR6, UQCRB/QCR7, UQCRQ/QCR8, UQCR10/QCR9, UQCR11/QCR10 and a cleavage product of UQCRFS1). This cytochrome bc1 complex then forms a dimer.</text>
</comment>
<comment type="subcellular location">
    <subcellularLocation>
        <location evidence="2">Mitochondrion inner membrane</location>
        <topology evidence="2">Multi-pass membrane protein</topology>
    </subcellularLocation>
</comment>
<comment type="miscellaneous">
    <text evidence="1">Heme 1 (or BL or b562) is low-potential and absorbs at about 562 nm, and heme 2 (or BH or b566) is high-potential and absorbs at about 566 nm.</text>
</comment>
<comment type="similarity">
    <text evidence="3 4">Belongs to the cytochrome b family.</text>
</comment>
<comment type="caution">
    <text evidence="2">The full-length protein contains only eight transmembrane helices, not nine as predicted by bioinformatics tools.</text>
</comment>
<accession>Q9T7N5</accession>
<protein>
    <recommendedName>
        <fullName>Cytochrome b</fullName>
    </recommendedName>
    <alternativeName>
        <fullName>Complex III subunit 3</fullName>
    </alternativeName>
    <alternativeName>
        <fullName>Complex III subunit III</fullName>
    </alternativeName>
    <alternativeName>
        <fullName>Cytochrome b-c1 complex subunit 3</fullName>
    </alternativeName>
    <alternativeName>
        <fullName>Ubiquinol-cytochrome-c reductase complex cytochrome b subunit</fullName>
    </alternativeName>
</protein>
<geneLocation type="mitochondrion"/>
<reference key="1">
    <citation type="journal article" date="1999" name="Cladistics">
        <title>Molecular phylogeny and biogeography of Madagascar's native rodents (Muridae: Nesomyinae): a test of the single origin hypothesis.</title>
        <authorList>
            <person name="Jansa S.A."/>
            <person name="Goodman S.M."/>
            <person name="Tucker P.K."/>
        </authorList>
    </citation>
    <scope>NUCLEOTIDE SEQUENCE [GENOMIC DNA]</scope>
    <source>
        <strain>Isolate Malb635</strain>
    </source>
</reference>
<feature type="chain" id="PRO_0000061259" description="Cytochrome b">
    <location>
        <begin position="1"/>
        <end position="380"/>
    </location>
</feature>
<feature type="transmembrane region" description="Helical" evidence="2">
    <location>
        <begin position="33"/>
        <end position="53"/>
    </location>
</feature>
<feature type="transmembrane region" description="Helical" evidence="2">
    <location>
        <begin position="77"/>
        <end position="98"/>
    </location>
</feature>
<feature type="transmembrane region" description="Helical" evidence="2">
    <location>
        <begin position="113"/>
        <end position="133"/>
    </location>
</feature>
<feature type="transmembrane region" description="Helical" evidence="2">
    <location>
        <begin position="178"/>
        <end position="198"/>
    </location>
</feature>
<feature type="transmembrane region" description="Helical" evidence="2">
    <location>
        <begin position="226"/>
        <end position="246"/>
    </location>
</feature>
<feature type="transmembrane region" description="Helical" evidence="2">
    <location>
        <begin position="288"/>
        <end position="308"/>
    </location>
</feature>
<feature type="transmembrane region" description="Helical" evidence="2">
    <location>
        <begin position="320"/>
        <end position="340"/>
    </location>
</feature>
<feature type="transmembrane region" description="Helical" evidence="2">
    <location>
        <begin position="347"/>
        <end position="367"/>
    </location>
</feature>
<feature type="binding site" description="axial binding residue" evidence="2">
    <location>
        <position position="83"/>
    </location>
    <ligand>
        <name>heme b</name>
        <dbReference type="ChEBI" id="CHEBI:60344"/>
        <label>b562</label>
    </ligand>
    <ligandPart>
        <name>Fe</name>
        <dbReference type="ChEBI" id="CHEBI:18248"/>
    </ligandPart>
</feature>
<feature type="binding site" description="axial binding residue" evidence="2">
    <location>
        <position position="97"/>
    </location>
    <ligand>
        <name>heme b</name>
        <dbReference type="ChEBI" id="CHEBI:60344"/>
        <label>b566</label>
    </ligand>
    <ligandPart>
        <name>Fe</name>
        <dbReference type="ChEBI" id="CHEBI:18248"/>
    </ligandPart>
</feature>
<feature type="binding site" description="axial binding residue" evidence="2">
    <location>
        <position position="182"/>
    </location>
    <ligand>
        <name>heme b</name>
        <dbReference type="ChEBI" id="CHEBI:60344"/>
        <label>b562</label>
    </ligand>
    <ligandPart>
        <name>Fe</name>
        <dbReference type="ChEBI" id="CHEBI:18248"/>
    </ligandPart>
</feature>
<feature type="binding site" description="axial binding residue" evidence="2">
    <location>
        <position position="196"/>
    </location>
    <ligand>
        <name>heme b</name>
        <dbReference type="ChEBI" id="CHEBI:60344"/>
        <label>b566</label>
    </ligand>
    <ligandPart>
        <name>Fe</name>
        <dbReference type="ChEBI" id="CHEBI:18248"/>
    </ligandPart>
</feature>
<feature type="binding site" evidence="2">
    <location>
        <position position="201"/>
    </location>
    <ligand>
        <name>a ubiquinone</name>
        <dbReference type="ChEBI" id="CHEBI:16389"/>
    </ligand>
</feature>
<name>CYB_MYSAL</name>
<gene>
    <name type="primary">MT-CYB</name>
    <name type="synonym">COB</name>
    <name type="synonym">CYTB</name>
    <name type="synonym">MTCYB</name>
</gene>
<evidence type="ECO:0000250" key="1"/>
<evidence type="ECO:0000250" key="2">
    <source>
        <dbReference type="UniProtKB" id="P00157"/>
    </source>
</evidence>
<evidence type="ECO:0000255" key="3">
    <source>
        <dbReference type="PROSITE-ProRule" id="PRU00967"/>
    </source>
</evidence>
<evidence type="ECO:0000255" key="4">
    <source>
        <dbReference type="PROSITE-ProRule" id="PRU00968"/>
    </source>
</evidence>
<proteinExistence type="inferred from homology"/>
<keyword id="KW-0249">Electron transport</keyword>
<keyword id="KW-0349">Heme</keyword>
<keyword id="KW-0408">Iron</keyword>
<keyword id="KW-0472">Membrane</keyword>
<keyword id="KW-0479">Metal-binding</keyword>
<keyword id="KW-0496">Mitochondrion</keyword>
<keyword id="KW-0999">Mitochondrion inner membrane</keyword>
<keyword id="KW-0679">Respiratory chain</keyword>
<keyword id="KW-0812">Transmembrane</keyword>
<keyword id="KW-1133">Transmembrane helix</keyword>
<keyword id="KW-0813">Transport</keyword>
<keyword id="KW-0830">Ubiquinone</keyword>
<dbReference type="EMBL" id="AF160607">
    <property type="protein sequence ID" value="AAF15223.1"/>
    <property type="molecule type" value="Genomic_DNA"/>
</dbReference>
<dbReference type="GO" id="GO:0005743">
    <property type="term" value="C:mitochondrial inner membrane"/>
    <property type="evidence" value="ECO:0007669"/>
    <property type="project" value="UniProtKB-SubCell"/>
</dbReference>
<dbReference type="GO" id="GO:0045275">
    <property type="term" value="C:respiratory chain complex III"/>
    <property type="evidence" value="ECO:0007669"/>
    <property type="project" value="InterPro"/>
</dbReference>
<dbReference type="GO" id="GO:0046872">
    <property type="term" value="F:metal ion binding"/>
    <property type="evidence" value="ECO:0007669"/>
    <property type="project" value="UniProtKB-KW"/>
</dbReference>
<dbReference type="GO" id="GO:0008121">
    <property type="term" value="F:ubiquinol-cytochrome-c reductase activity"/>
    <property type="evidence" value="ECO:0007669"/>
    <property type="project" value="InterPro"/>
</dbReference>
<dbReference type="GO" id="GO:0006122">
    <property type="term" value="P:mitochondrial electron transport, ubiquinol to cytochrome c"/>
    <property type="evidence" value="ECO:0007669"/>
    <property type="project" value="TreeGrafter"/>
</dbReference>
<dbReference type="CDD" id="cd00290">
    <property type="entry name" value="cytochrome_b_C"/>
    <property type="match status" value="1"/>
</dbReference>
<dbReference type="CDD" id="cd00284">
    <property type="entry name" value="Cytochrome_b_N"/>
    <property type="match status" value="1"/>
</dbReference>
<dbReference type="FunFam" id="1.20.810.10:FF:000002">
    <property type="entry name" value="Cytochrome b"/>
    <property type="match status" value="1"/>
</dbReference>
<dbReference type="Gene3D" id="1.20.810.10">
    <property type="entry name" value="Cytochrome Bc1 Complex, Chain C"/>
    <property type="match status" value="1"/>
</dbReference>
<dbReference type="InterPro" id="IPR005798">
    <property type="entry name" value="Cyt_b/b6_C"/>
</dbReference>
<dbReference type="InterPro" id="IPR036150">
    <property type="entry name" value="Cyt_b/b6_C_sf"/>
</dbReference>
<dbReference type="InterPro" id="IPR005797">
    <property type="entry name" value="Cyt_b/b6_N"/>
</dbReference>
<dbReference type="InterPro" id="IPR027387">
    <property type="entry name" value="Cytb/b6-like_sf"/>
</dbReference>
<dbReference type="InterPro" id="IPR030689">
    <property type="entry name" value="Cytochrome_b"/>
</dbReference>
<dbReference type="InterPro" id="IPR048260">
    <property type="entry name" value="Cytochrome_b_C_euk/bac"/>
</dbReference>
<dbReference type="InterPro" id="IPR048259">
    <property type="entry name" value="Cytochrome_b_N_euk/bac"/>
</dbReference>
<dbReference type="InterPro" id="IPR016174">
    <property type="entry name" value="Di-haem_cyt_TM"/>
</dbReference>
<dbReference type="PANTHER" id="PTHR19271">
    <property type="entry name" value="CYTOCHROME B"/>
    <property type="match status" value="1"/>
</dbReference>
<dbReference type="PANTHER" id="PTHR19271:SF16">
    <property type="entry name" value="CYTOCHROME B"/>
    <property type="match status" value="1"/>
</dbReference>
<dbReference type="Pfam" id="PF00032">
    <property type="entry name" value="Cytochrom_B_C"/>
    <property type="match status" value="1"/>
</dbReference>
<dbReference type="Pfam" id="PF00033">
    <property type="entry name" value="Cytochrome_B"/>
    <property type="match status" value="1"/>
</dbReference>
<dbReference type="PIRSF" id="PIRSF038885">
    <property type="entry name" value="COB"/>
    <property type="match status" value="1"/>
</dbReference>
<dbReference type="SUPFAM" id="SSF81648">
    <property type="entry name" value="a domain/subunit of cytochrome bc1 complex (Ubiquinol-cytochrome c reductase)"/>
    <property type="match status" value="1"/>
</dbReference>
<dbReference type="SUPFAM" id="SSF81342">
    <property type="entry name" value="Transmembrane di-heme cytochromes"/>
    <property type="match status" value="1"/>
</dbReference>
<dbReference type="PROSITE" id="PS51003">
    <property type="entry name" value="CYTB_CTER"/>
    <property type="match status" value="1"/>
</dbReference>
<dbReference type="PROSITE" id="PS51002">
    <property type="entry name" value="CYTB_NTER"/>
    <property type="match status" value="1"/>
</dbReference>
<organism>
    <name type="scientific">Mystromys albicaudatus</name>
    <name type="common">White-tailed mouse</name>
    <dbReference type="NCBI Taxonomy" id="56239"/>
    <lineage>
        <taxon>Eukaryota</taxon>
        <taxon>Metazoa</taxon>
        <taxon>Chordata</taxon>
        <taxon>Craniata</taxon>
        <taxon>Vertebrata</taxon>
        <taxon>Euteleostomi</taxon>
        <taxon>Mammalia</taxon>
        <taxon>Eutheria</taxon>
        <taxon>Euarchontoglires</taxon>
        <taxon>Glires</taxon>
        <taxon>Rodentia</taxon>
        <taxon>Myomorpha</taxon>
        <taxon>Muroidea</taxon>
        <taxon>Nesomyidae</taxon>
        <taxon>Mystromyinae</taxon>
        <taxon>Mystromys</taxon>
    </lineage>
</organism>